<dbReference type="GO" id="GO:0031012">
    <property type="term" value="C:extracellular matrix"/>
    <property type="evidence" value="ECO:0007669"/>
    <property type="project" value="TreeGrafter"/>
</dbReference>
<dbReference type="GO" id="GO:0005615">
    <property type="term" value="C:extracellular space"/>
    <property type="evidence" value="ECO:0007669"/>
    <property type="project" value="TreeGrafter"/>
</dbReference>
<dbReference type="GO" id="GO:0030020">
    <property type="term" value="F:extracellular matrix structural constituent conferring tensile strength"/>
    <property type="evidence" value="ECO:0007669"/>
    <property type="project" value="TreeGrafter"/>
</dbReference>
<dbReference type="GO" id="GO:0030198">
    <property type="term" value="P:extracellular matrix organization"/>
    <property type="evidence" value="ECO:0007669"/>
    <property type="project" value="TreeGrafter"/>
</dbReference>
<dbReference type="InterPro" id="IPR008160">
    <property type="entry name" value="Collagen"/>
</dbReference>
<dbReference type="InterPro" id="IPR050149">
    <property type="entry name" value="Collagen_superfamily"/>
</dbReference>
<dbReference type="PANTHER" id="PTHR24023">
    <property type="entry name" value="COLLAGEN ALPHA"/>
    <property type="match status" value="1"/>
</dbReference>
<dbReference type="PANTHER" id="PTHR24023:SF966">
    <property type="entry name" value="COLLAGEN ALPHA-1(XXII) CHAIN-LIKE"/>
    <property type="match status" value="1"/>
</dbReference>
<dbReference type="Pfam" id="PF01391">
    <property type="entry name" value="Collagen"/>
    <property type="match status" value="11"/>
</dbReference>
<sequence>GGVSVPGPMGPSGPRGLPGPPGSPGPQGFQGPPGSSGPMGPRGPPGPPGKNGDDGEAGKPGRPGERGPPGPQGARGLPGTAGLPGMKGHRGFSGLDGAKGDAGPAGPKQMGPRGLPGERGRPGASGPAGARGNDGATGAAGPPGPTGPAGPPGFPGAVGAKGEAGPQGARGSEGPQGVRGEPGPPGPAGAAGPAGNPGADGQPGAKGANGAPGIAGAPGFPGARGPSGPQGPSGAPGPKGNSGEPGAPGNKGDTGAKGEPGPTGIQGPPGPAGEEGKRGARGEPGPTGLPGPPGERGGPGSRGFPGADGIAGPKGPAGERGSPGPAGPKGSPGEAGRPGEAGLPGAKGLTGSPGSPGPDGKTGPPGPAGQDGRPGPAGPPGARGQAGVMGFPGPKGAAGEPGKAGERGVPGPPGAVGPAGKDGEAGAQGPPGPAGPAGERGEQGPAGSPGFQGLPGPAGPPGEAGKPGEQGVPGDLGAPGPSGARGERGFPGERGVQGPPGPAGPRGNGAPGNDGAKGDAGAPGAPGSQGAPGLQGMPGERGAAGLPGPKGDRGDAGPKGADGAPGKDGVRGLTGPIGPPGPAGAAGDKGETGPSGPAGPTGARGAPGDRGEPGPPGPAGFAGPPGADGQPGAKGEPGDAGAKGDAGPPGPAGPTGPPGPIGNVGAPGPKGARGSAGPPGATGFPGAAGRVGPPGPSGNAGPPGPPGPVGKEGGKGPRGETGPAGRPGEVGPPGPPGPGEKGSPGADGPAGAPGTPGPQGIAGQRGVVGLPGQRGERGFPGLPGPSGEPGKQGPSGSSGERGPPGPMGPPGLAGPPGEAGREGSPGAEGSPGRDGSPGPKGDRGETGPGPPGAPGAPGAPGPVGPAGKSGDRGETGPSGPAGPAGPAGARGPAGPQGPRGDKGETGEQGDRGIKGHRGFSGLQGPAGPPGSPGEQGPSGASGPAGPRGPPGSAGTPGKDGLNGLPGPIGPPGPRGRTGDAGPVGPPGPPGPPGPPGPP</sequence>
<organism evidence="7">
    <name type="scientific">Glyptodon sp. (strain SLP-2019)</name>
    <name type="common">Giant armadillo</name>
    <dbReference type="NCBI Taxonomy" id="2546663"/>
    <lineage>
        <taxon>Eukaryota</taxon>
        <taxon>Metazoa</taxon>
        <taxon>Chordata</taxon>
        <taxon>Craniata</taxon>
        <taxon>Vertebrata</taxon>
        <taxon>Euteleostomi</taxon>
        <taxon>Mammalia</taxon>
        <taxon>Eutheria</taxon>
        <taxon>Xenarthra</taxon>
        <taxon>Cingulata</taxon>
        <taxon>Chlamyphoridae</taxon>
        <taxon>Glyptodon</taxon>
    </lineage>
</organism>
<name>CO1A1_GLYSX</name>
<feature type="chain" id="PRO_0000448464" description="Collagen alpha-1(I) chain">
    <location>
        <begin position="1"/>
        <end position="998"/>
    </location>
</feature>
<feature type="region of interest" description="Disordered" evidence="5">
    <location>
        <begin position="1"/>
        <end position="998"/>
    </location>
</feature>
<feature type="compositionally biased region" description="Low complexity" evidence="5">
    <location>
        <begin position="26"/>
        <end position="39"/>
    </location>
</feature>
<feature type="compositionally biased region" description="Basic and acidic residues" evidence="5">
    <location>
        <begin position="51"/>
        <end position="65"/>
    </location>
</feature>
<feature type="compositionally biased region" description="Low complexity" evidence="5">
    <location>
        <begin position="101"/>
        <end position="115"/>
    </location>
</feature>
<feature type="compositionally biased region" description="Low complexity" evidence="5">
    <location>
        <begin position="122"/>
        <end position="140"/>
    </location>
</feature>
<feature type="compositionally biased region" description="Pro residues" evidence="5">
    <location>
        <begin position="142"/>
        <end position="154"/>
    </location>
</feature>
<feature type="compositionally biased region" description="Low complexity" evidence="5">
    <location>
        <begin position="188"/>
        <end position="238"/>
    </location>
</feature>
<feature type="compositionally biased region" description="Gly residues" evidence="5">
    <location>
        <begin position="294"/>
        <end position="303"/>
    </location>
</feature>
<feature type="compositionally biased region" description="Low complexity" evidence="5">
    <location>
        <begin position="347"/>
        <end position="401"/>
    </location>
</feature>
<feature type="compositionally biased region" description="Low complexity" evidence="5">
    <location>
        <begin position="443"/>
        <end position="470"/>
    </location>
</feature>
<feature type="compositionally biased region" description="Low complexity" evidence="5">
    <location>
        <begin position="513"/>
        <end position="535"/>
    </location>
</feature>
<feature type="compositionally biased region" description="Low complexity" evidence="5">
    <location>
        <begin position="592"/>
        <end position="606"/>
    </location>
</feature>
<feature type="compositionally biased region" description="Low complexity" evidence="5">
    <location>
        <begin position="619"/>
        <end position="646"/>
    </location>
</feature>
<feature type="compositionally biased region" description="Pro residues" evidence="5">
    <location>
        <begin position="648"/>
        <end position="660"/>
    </location>
</feature>
<feature type="compositionally biased region" description="Low complexity" evidence="5">
    <location>
        <begin position="675"/>
        <end position="691"/>
    </location>
</feature>
<feature type="compositionally biased region" description="Low complexity" evidence="5">
    <location>
        <begin position="720"/>
        <end position="729"/>
    </location>
</feature>
<feature type="compositionally biased region" description="Low complexity" evidence="5">
    <location>
        <begin position="741"/>
        <end position="762"/>
    </location>
</feature>
<feature type="compositionally biased region" description="Pro residues" evidence="5">
    <location>
        <begin position="803"/>
        <end position="813"/>
    </location>
</feature>
<feature type="compositionally biased region" description="Low complexity" evidence="5">
    <location>
        <begin position="815"/>
        <end position="830"/>
    </location>
</feature>
<feature type="compositionally biased region" description="Pro residues" evidence="5">
    <location>
        <begin position="848"/>
        <end position="863"/>
    </location>
</feature>
<feature type="compositionally biased region" description="Low complexity" evidence="5">
    <location>
        <begin position="884"/>
        <end position="898"/>
    </location>
</feature>
<feature type="compositionally biased region" description="Basic and acidic residues" evidence="5">
    <location>
        <begin position="899"/>
        <end position="913"/>
    </location>
</feature>
<feature type="compositionally biased region" description="Low complexity" evidence="5">
    <location>
        <begin position="932"/>
        <end position="965"/>
    </location>
</feature>
<feature type="compositionally biased region" description="Pro residues" evidence="5">
    <location>
        <begin position="983"/>
        <end position="998"/>
    </location>
</feature>
<feature type="modified residue" description="4-hydroxyproline" evidence="3">
    <location>
        <position position="18"/>
    </location>
</feature>
<feature type="modified residue" description="4-hydroxyproline" evidence="3">
    <location>
        <position position="21"/>
    </location>
</feature>
<feature type="modified residue" description="4-hydroxyproline" evidence="3">
    <location>
        <position position="24"/>
    </location>
</feature>
<feature type="modified residue" description="4-hydroxyproline" evidence="3">
    <location>
        <position position="33"/>
    </location>
</feature>
<feature type="modified residue" description="4-hydroxyproline" evidence="3">
    <location>
        <position position="48"/>
    </location>
</feature>
<feature type="modified residue" description="4-hydroxyproline" evidence="3">
    <location>
        <position position="63"/>
    </location>
</feature>
<feature type="modified residue" description="4-hydroxyproline" evidence="3">
    <location>
        <position position="69"/>
    </location>
</feature>
<feature type="modified residue" description="4-hydroxyproline" evidence="3">
    <location>
        <position position="78"/>
    </location>
</feature>
<feature type="modified residue" description="4-hydroxyproline" evidence="3">
    <location>
        <position position="84"/>
    </location>
</feature>
<feature type="modified residue" description="5-hydroxylysine; alternate" evidence="1">
    <location>
        <position position="87"/>
    </location>
</feature>
<feature type="modified residue" description="Phosphoserine" evidence="2">
    <location>
        <position position="93"/>
    </location>
</feature>
<feature type="modified residue" description="4-hydroxyproline" evidence="3">
    <location>
        <position position="116"/>
    </location>
</feature>
<feature type="modified residue" description="4-hydroxyproline" evidence="3">
    <location>
        <position position="122"/>
    </location>
</feature>
<feature type="modified residue" description="4-hydroxyproline" evidence="3">
    <location>
        <position position="143"/>
    </location>
</feature>
<feature type="modified residue" description="4-hydroxyproline" evidence="3">
    <location>
        <position position="152"/>
    </location>
</feature>
<feature type="modified residue" description="4-hydroxyproline" evidence="3">
    <location>
        <position position="155"/>
    </location>
</feature>
<feature type="modified residue" description="4-hydroxyproline" evidence="3">
    <location>
        <position position="182"/>
    </location>
</feature>
<feature type="modified residue" description="4-hydroxyproline" evidence="3">
    <location>
        <position position="185"/>
    </location>
</feature>
<feature type="modified residue" description="4-hydroxyproline" evidence="3">
    <location>
        <position position="197"/>
    </location>
</feature>
<feature type="modified residue" description="4-hydroxyproline" evidence="3">
    <location>
        <position position="203"/>
    </location>
</feature>
<feature type="modified residue" description="4-hydroxyproline" evidence="3">
    <location>
        <position position="212"/>
    </location>
</feature>
<feature type="modified residue" description="4-hydroxyproline" evidence="3">
    <location>
        <position position="218"/>
    </location>
</feature>
<feature type="modified residue" description="4-hydroxyproline" evidence="3">
    <location>
        <position position="221"/>
    </location>
</feature>
<feature type="modified residue" description="4-hydroxyproline" evidence="3">
    <location>
        <position position="236"/>
    </location>
</feature>
<feature type="modified residue" description="5-hydroxylysine" evidence="3">
    <location>
        <position position="239"/>
    </location>
</feature>
<feature type="modified residue" description="4-hydroxyproline" evidence="3">
    <location>
        <position position="245"/>
    </location>
</feature>
<feature type="modified residue" description="4-hydroxyproline" evidence="3">
    <location>
        <position position="248"/>
    </location>
</feature>
<feature type="modified residue" description="4-hydroxyproline" evidence="3">
    <location>
        <position position="260"/>
    </location>
</feature>
<feature type="modified residue" description="4-hydroxyproline" evidence="3">
    <location>
        <position position="269"/>
    </location>
</feature>
<feature type="modified residue" description="4-hydroxyproline" evidence="3">
    <location>
        <position position="284"/>
    </location>
</feature>
<feature type="modified residue" description="4-hydroxyproline" evidence="3">
    <location>
        <position position="290"/>
    </location>
</feature>
<feature type="modified residue" description="4-hydroxyproline" evidence="3">
    <location>
        <position position="299"/>
    </location>
</feature>
<feature type="modified residue" description="4-hydroxyproline" evidence="3">
    <location>
        <position position="305"/>
    </location>
</feature>
<feature type="modified residue" description="5-hydroxylysine" evidence="3">
    <location>
        <position position="314"/>
    </location>
</feature>
<feature type="modified residue" description="4-hydroxyproline" evidence="3">
    <location>
        <position position="323"/>
    </location>
</feature>
<feature type="modified residue" description="4-hydroxyproline" evidence="3">
    <location>
        <position position="332"/>
    </location>
</feature>
<feature type="modified residue" description="4-hydroxyproline" evidence="3">
    <location>
        <position position="338"/>
    </location>
</feature>
<feature type="modified residue" description="4-hydroxyproline" evidence="3">
    <location>
        <position position="344"/>
    </location>
</feature>
<feature type="modified residue" description="4-hydroxyproline" evidence="3">
    <location>
        <position position="353"/>
    </location>
</feature>
<feature type="modified residue" description="4-hydroxyproline" evidence="3">
    <location>
        <position position="356"/>
    </location>
</feature>
<feature type="modified residue" description="4-hydroxyproline" evidence="3">
    <location>
        <position position="365"/>
    </location>
</feature>
<feature type="modified residue" description="4-hydroxyproline" evidence="3">
    <location>
        <position position="374"/>
    </location>
</feature>
<feature type="modified residue" description="4-hydroxyproline" evidence="3">
    <location>
        <position position="380"/>
    </location>
</feature>
<feature type="modified residue" description="4-hydroxyproline" evidence="3">
    <location>
        <position position="392"/>
    </location>
</feature>
<feature type="modified residue" description="4-hydroxyproline" evidence="3">
    <location>
        <position position="401"/>
    </location>
</feature>
<feature type="modified residue" description="4-hydroxyproline" evidence="3">
    <location>
        <position position="410"/>
    </location>
</feature>
<feature type="modified residue" description="4-hydroxyproline" evidence="3">
    <location>
        <position position="413"/>
    </location>
</feature>
<feature type="modified residue" description="4-hydroxyproline" evidence="3">
    <location>
        <position position="431"/>
    </location>
</feature>
<feature type="modified residue" description="4-hydroxyproline" evidence="3">
    <location>
        <position position="449"/>
    </location>
</feature>
<feature type="modified residue" description="4-hydroxyproline" evidence="3">
    <location>
        <position position="455"/>
    </location>
</feature>
<feature type="modified residue" description="4-hydroxyproline" evidence="3">
    <location>
        <position position="461"/>
    </location>
</feature>
<feature type="modified residue" description="4-hydroxyproline" evidence="3">
    <location>
        <position position="467"/>
    </location>
</feature>
<feature type="modified residue" description="4-hydroxyproline" evidence="3">
    <location>
        <position position="473"/>
    </location>
</feature>
<feature type="modified residue" description="4-hydroxyproline" evidence="3">
    <location>
        <position position="479"/>
    </location>
</feature>
<feature type="modified residue" description="4-hydroxyproline" evidence="3">
    <location>
        <position position="491"/>
    </location>
</feature>
<feature type="modified residue" description="4-hydroxyproline" evidence="3">
    <location>
        <position position="500"/>
    </location>
</feature>
<feature type="modified residue" description="4-hydroxyproline" evidence="3">
    <location>
        <position position="511"/>
    </location>
</feature>
<feature type="modified residue" description="4-hydroxyproline" evidence="3">
    <location>
        <position position="523"/>
    </location>
</feature>
<feature type="modified residue" description="4-hydroxyproline" evidence="3">
    <location>
        <position position="526"/>
    </location>
</feature>
<feature type="modified residue" description="4-hydroxyproline" evidence="3">
    <location>
        <position position="532"/>
    </location>
</feature>
<feature type="modified residue" description="4-hydroxyproline" evidence="3">
    <location>
        <position position="538"/>
    </location>
</feature>
<feature type="modified residue" description="4-hydroxyproline" evidence="3">
    <location>
        <position position="547"/>
    </location>
</feature>
<feature type="modified residue" description="5-hydroxylysine" evidence="3">
    <location>
        <position position="559"/>
    </location>
</feature>
<feature type="modified residue" description="4-hydroxyproline" evidence="3">
    <location>
        <position position="565"/>
    </location>
</feature>
<feature type="modified residue" description="4-hydroxyproline" evidence="3">
    <location>
        <position position="580"/>
    </location>
</feature>
<feature type="modified residue" description="Phosphoserine" evidence="2">
    <location>
        <position position="595"/>
    </location>
</feature>
<feature type="modified residue" description="4-hydroxyproline" evidence="3">
    <location>
        <position position="607"/>
    </location>
</feature>
<feature type="modified residue" description="4-hydroxyproline" evidence="3">
    <location>
        <position position="613"/>
    </location>
</feature>
<feature type="modified residue" description="4-hydroxyproline" evidence="3">
    <location>
        <position position="616"/>
    </location>
</feature>
<feature type="modified residue" description="4-hydroxyproline" evidence="3">
    <location>
        <position position="625"/>
    </location>
</feature>
<feature type="modified residue" description="4-hydroxyproline" evidence="3">
    <location>
        <position position="631"/>
    </location>
</feature>
<feature type="modified residue" description="4-hydroxyproline" evidence="3">
    <location>
        <position position="649"/>
    </location>
</feature>
<feature type="modified residue" description="4-hydroxyproline" evidence="3">
    <location>
        <position position="658"/>
    </location>
</feature>
<feature type="modified residue" description="4-hydroxyproline" evidence="3">
    <location>
        <position position="667"/>
    </location>
</feature>
<feature type="modified residue" description="5-hydroxylysine" evidence="3">
    <location>
        <position position="670"/>
    </location>
</feature>
<feature type="modified residue" description="4-hydroxyproline" evidence="3">
    <location>
        <position position="679"/>
    </location>
</feature>
<feature type="modified residue" description="4-hydroxyproline" evidence="3">
    <location>
        <position position="685"/>
    </location>
</feature>
<feature type="modified residue" description="3-hydroxyproline" evidence="4">
    <location>
        <position position="693"/>
    </location>
</feature>
<feature type="modified residue" description="4-hydroxyproline" evidence="4">
    <location>
        <position position="694"/>
    </location>
</feature>
<feature type="modified residue" description="4-hydroxyproline" evidence="4">
    <location>
        <position position="703"/>
    </location>
</feature>
<feature type="modified residue" description="4-hydroxyproline" evidence="4">
    <location>
        <position position="706"/>
    </location>
</feature>
<feature type="modified residue" description="4-hydroxyproline" evidence="3">
    <location>
        <position position="727"/>
    </location>
</feature>
<feature type="modified residue" description="4-hydroxyproline" evidence="3">
    <location>
        <position position="736"/>
    </location>
</feature>
<feature type="modified residue" description="4-hydroxyproline" evidence="3">
    <location>
        <position position="744"/>
    </location>
</feature>
<feature type="modified residue" description="4-hydroxyproline" evidence="3">
    <location>
        <position position="753"/>
    </location>
</feature>
<feature type="modified residue" description="4-hydroxyproline" evidence="3">
    <location>
        <position position="771"/>
    </location>
</feature>
<feature type="modified residue" description="4-hydroxyproline" evidence="3">
    <location>
        <position position="780"/>
    </location>
</feature>
<feature type="modified residue" description="4-hydroxyproline" evidence="3">
    <location>
        <position position="783"/>
    </location>
</feature>
<feature type="modified residue" description="4-hydroxyproline" evidence="3">
    <location>
        <position position="789"/>
    </location>
</feature>
<feature type="modified residue" description="4-hydroxyproline" evidence="3">
    <location>
        <position position="804"/>
    </location>
</feature>
<feature type="modified residue" description="4-hydroxyproline" evidence="3">
    <location>
        <position position="810"/>
    </location>
</feature>
<feature type="modified residue" description="4-hydroxyproline" evidence="3">
    <location>
        <position position="816"/>
    </location>
</feature>
<feature type="modified residue" description="4-hydroxyproline" evidence="3">
    <location>
        <position position="825"/>
    </location>
</feature>
<feature type="modified residue" description="4-hydroxyproline" evidence="3">
    <location>
        <position position="831"/>
    </location>
</feature>
<feature type="modified residue" description="5-hydroxylysine" evidence="3">
    <location>
        <position position="840"/>
    </location>
</feature>
<feature type="modified residue" description="4-hydroxyproline" evidence="3">
    <location>
        <position position="851"/>
    </location>
</feature>
<feature type="modified residue" description="4-hydroxyproline" evidence="3">
    <location>
        <position position="854"/>
    </location>
</feature>
<feature type="modified residue" description="4-hydroxyproline" evidence="3">
    <location>
        <position position="857"/>
    </location>
</feature>
<feature type="modified residue" description="5-hydroxylysine" evidence="3">
    <location>
        <position position="902"/>
    </location>
</feature>
<feature type="modified residue" description="5-hydroxylysine; alternate" evidence="3">
    <location>
        <position position="914"/>
    </location>
</feature>
<feature type="modified residue" description="4-hydroxyproline" evidence="3">
    <location>
        <position position="929"/>
    </location>
</feature>
<feature type="modified residue" description="4-hydroxyproline" evidence="3">
    <location>
        <position position="932"/>
    </location>
</feature>
<feature type="modified residue" description="4-hydroxyproline" evidence="3">
    <location>
        <position position="950"/>
    </location>
</feature>
<feature type="modified residue" description="4-hydroxyproline" evidence="4">
    <location>
        <position position="965"/>
    </location>
</feature>
<feature type="modified residue" description="3-hydroxyproline" evidence="4">
    <location>
        <position position="970"/>
    </location>
</feature>
<feature type="modified residue" description="4-hydroxyproline" evidence="4">
    <location>
        <position position="971"/>
    </location>
</feature>
<feature type="modified residue" description="3-hydroxyproline" evidence="4">
    <location>
        <position position="985"/>
    </location>
</feature>
<feature type="modified residue" description="4-hydroxyproline" evidence="4">
    <location>
        <position position="986"/>
    </location>
</feature>
<feature type="modified residue" description="3-hydroxyproline" evidence="4">
    <location>
        <position position="988"/>
    </location>
</feature>
<feature type="modified residue" description="4-hydroxyproline" evidence="4">
    <location>
        <position position="989"/>
    </location>
</feature>
<feature type="modified residue" description="3-hydroxyproline" evidence="4">
    <location>
        <position position="991"/>
    </location>
</feature>
<feature type="modified residue" description="4-hydroxyproline" evidence="4">
    <location>
        <position position="992"/>
    </location>
</feature>
<feature type="modified residue" description="4-hydroxyproline" evidence="4">
    <location>
        <position position="995"/>
    </location>
</feature>
<feature type="modified residue" description="4-hydroxyproline" evidence="4">
    <location>
        <position position="998"/>
    </location>
</feature>
<feature type="glycosylation site" description="O-linked (Gal...) hydroxylysine; alternate" evidence="1">
    <location>
        <position position="87"/>
    </location>
</feature>
<feature type="glycosylation site" description="O-linked (Gal...) hydroxylysine; alternate" evidence="3">
    <location>
        <position position="914"/>
    </location>
</feature>
<feature type="unsure residue" description="L or I" evidence="6">
    <location>
        <position position="17"/>
    </location>
</feature>
<feature type="unsure residue" description="L or I" evidence="6">
    <location>
        <position position="77"/>
    </location>
</feature>
<feature type="unsure residue" description="L or I" evidence="6">
    <location>
        <position position="83"/>
    </location>
</feature>
<feature type="unsure residue" description="L or I" evidence="6">
    <location>
        <position position="95"/>
    </location>
</feature>
<feature type="unsure residue" description="L or I" evidence="6">
    <location>
        <position position="115"/>
    </location>
</feature>
<feature type="unsure residue" description="I or L" evidence="6">
    <location>
        <position position="214"/>
    </location>
</feature>
<feature type="unsure residue" description="I or L" evidence="6">
    <location>
        <position position="265"/>
    </location>
</feature>
<feature type="unsure residue" description="L or I" evidence="6">
    <location>
        <position position="289"/>
    </location>
</feature>
<feature type="unsure residue" description="I or L" evidence="6">
    <location>
        <position position="310"/>
    </location>
</feature>
<feature type="unsure residue" description="L or I" evidence="6">
    <location>
        <position position="343"/>
    </location>
</feature>
<feature type="unsure residue" description="L or I" evidence="6">
    <location>
        <position position="349"/>
    </location>
</feature>
<feature type="unsure residue" description="L or I" evidence="6">
    <location>
        <position position="454"/>
    </location>
</feature>
<feature type="unsure residue" description="L or I" evidence="6">
    <location>
        <position position="476"/>
    </location>
</feature>
<feature type="unsure residue" description="L or I" evidence="6">
    <location>
        <position position="534"/>
    </location>
</feature>
<feature type="unsure residue" description="L or I" evidence="6">
    <location>
        <position position="546"/>
    </location>
</feature>
<feature type="unsure residue" description="L or I" evidence="6">
    <location>
        <position position="573"/>
    </location>
</feature>
<feature type="unsure residue" description="I or L" evidence="6">
    <location>
        <position position="577"/>
    </location>
</feature>
<feature type="unsure residue" description="I or L" evidence="6">
    <location>
        <position position="661"/>
    </location>
</feature>
<feature type="unsure residue" description="I or L" evidence="6">
    <location>
        <position position="761"/>
    </location>
</feature>
<feature type="unsure residue" description="L or I" evidence="6">
    <location>
        <position position="770"/>
    </location>
</feature>
<feature type="unsure residue" description="L or I" evidence="6">
    <location>
        <position position="782"/>
    </location>
</feature>
<feature type="unsure residue" description="L or I" evidence="6">
    <location>
        <position position="812"/>
    </location>
</feature>
<feature type="unsure residue" description="I or L" evidence="6">
    <location>
        <position position="913"/>
    </location>
</feature>
<feature type="unsure residue" description="L or I" evidence="6">
    <location>
        <position position="922"/>
    </location>
</feature>
<feature type="unsure residue" description="L or I" evidence="6">
    <location>
        <position position="961"/>
    </location>
</feature>
<feature type="unsure residue" description="L or I" evidence="6">
    <location>
        <position position="964"/>
    </location>
</feature>
<feature type="unsure residue" description="I or L" evidence="6">
    <location>
        <position position="968"/>
    </location>
</feature>
<feature type="non-consecutive residues" evidence="7">
    <location>
        <begin position="34"/>
        <end position="35"/>
    </location>
</feature>
<feature type="non-consecutive residues" evidence="7">
    <location>
        <begin position="108"/>
        <end position="109"/>
    </location>
</feature>
<feature type="non-consecutive residues" evidence="7">
    <location>
        <begin position="507"/>
        <end position="508"/>
    </location>
</feature>
<feature type="non-consecutive residues" evidence="7">
    <location>
        <begin position="738"/>
        <end position="739"/>
    </location>
</feature>
<feature type="non-consecutive residues" evidence="7">
    <location>
        <begin position="848"/>
        <end position="849"/>
    </location>
</feature>
<feature type="non-terminal residue" evidence="7">
    <location>
        <position position="1"/>
    </location>
</feature>
<feature type="non-terminal residue" evidence="7">
    <location>
        <position position="998"/>
    </location>
</feature>
<reference evidence="8" key="1">
    <citation type="journal article" date="2019" name="Nat. Ecol. Evol.">
        <title>Palaeoproteomics resolves sloth relationships.</title>
        <authorList>
            <person name="Presslee S."/>
            <person name="Slater G.J."/>
            <person name="Pujos F."/>
            <person name="Forasiepi A.M."/>
            <person name="Fischer R."/>
            <person name="Molloy K."/>
            <person name="Mackie M."/>
            <person name="Olsen J.V."/>
            <person name="Kramarz A."/>
            <person name="Taglioretti M."/>
            <person name="Scaglia F."/>
            <person name="Lezcano M."/>
            <person name="Lanata J.L."/>
            <person name="Southon J."/>
            <person name="Feranec R."/>
            <person name="Bloch J."/>
            <person name="Hajduk A."/>
            <person name="Martin F.M."/>
            <person name="Salas Gismondi R."/>
            <person name="Reguero M."/>
            <person name="de Muizon C."/>
            <person name="Greenwood A."/>
            <person name="Chait B.T."/>
            <person name="Penkman K."/>
            <person name="Collins M."/>
            <person name="MacPhee R.D.E."/>
        </authorList>
    </citation>
    <scope>PROTEIN SEQUENCE</scope>
    <scope>TISSUE SPECIFICITY</scope>
    <scope>IDENTIFICATION BY MASS SPECTROMETRY</scope>
    <source>
        <tissue evidence="7">Bone</tissue>
    </source>
</reference>
<proteinExistence type="evidence at protein level"/>
<protein>
    <recommendedName>
        <fullName evidence="7">Collagen alpha-1(I) chain</fullName>
    </recommendedName>
    <alternativeName>
        <fullName evidence="1">Alpha-1 type I collagen</fullName>
    </alternativeName>
</protein>
<evidence type="ECO:0000250" key="1">
    <source>
        <dbReference type="UniProtKB" id="P02452"/>
    </source>
</evidence>
<evidence type="ECO:0000250" key="2">
    <source>
        <dbReference type="UniProtKB" id="P02454"/>
    </source>
</evidence>
<evidence type="ECO:0000250" key="3">
    <source>
        <dbReference type="UniProtKB" id="P02457"/>
    </source>
</evidence>
<evidence type="ECO:0000250" key="4">
    <source>
        <dbReference type="UniProtKB" id="P11087"/>
    </source>
</evidence>
<evidence type="ECO:0000256" key="5">
    <source>
        <dbReference type="SAM" id="MobiDB-lite"/>
    </source>
</evidence>
<evidence type="ECO:0000269" key="6">
    <source>
    </source>
</evidence>
<evidence type="ECO:0000303" key="7">
    <source>
    </source>
</evidence>
<evidence type="ECO:0000305" key="8"/>
<comment type="function">
    <text evidence="8">Type I collagen is a member of group I collagen (fibrillar forming collagen).</text>
</comment>
<comment type="subunit">
    <text evidence="8">Trimers of one alpha 2(I) and two alpha 1(I) chains.</text>
</comment>
<comment type="subcellular location">
    <subcellularLocation>
        <location>Secreted</location>
    </subcellularLocation>
    <subcellularLocation>
        <location>Secreted</location>
        <location>Extracellular space</location>
    </subcellularLocation>
    <subcellularLocation>
        <location evidence="8">Secreted</location>
        <location evidence="8">Extracellular space</location>
        <location evidence="8">Extracellular matrix</location>
    </subcellularLocation>
</comment>
<comment type="tissue specificity">
    <text evidence="6">Expressed in bones.</text>
</comment>
<comment type="PTM">
    <text evidence="1">Contains mostly 4-hydroxyproline. Proline residues at the third position of the tripeptide repeating unit (G-X-Y) are hydroxylated in some or all of the chains.</text>
</comment>
<comment type="PTM">
    <text evidence="4">Contains 3-hydroxyproline at a few sites. This modification occurs on the first proline residue in the sequence motif Gly-Pro-Hyp, where Hyp is 4-hydroxyproline.</text>
</comment>
<comment type="PTM">
    <text evidence="1">Lysine residues at the third position of the tripeptide repeating unit (G-X-Y) are 5-hydroxylated in some or all of the chains.</text>
</comment>
<comment type="PTM">
    <text evidence="1">O-glycosylated on hydroxylated lysine residues. The O-linked glycan consists of a Glc-Gal disaccharide.</text>
</comment>
<comment type="miscellaneous">
    <text evidence="6">These protein fragments were extracted from an ancient femur bone collected in Buenos Aires, Argentina.</text>
</comment>
<comment type="similarity">
    <text evidence="8">Belongs to the fibrillar collagen family.</text>
</comment>
<accession>C0HLH9</accession>
<keyword id="KW-0903">Direct protein sequencing</keyword>
<keyword id="KW-0952">Extinct organism protein</keyword>
<keyword id="KW-0272">Extracellular matrix</keyword>
<keyword id="KW-0325">Glycoprotein</keyword>
<keyword id="KW-0379">Hydroxylation</keyword>
<keyword id="KW-0597">Phosphoprotein</keyword>
<keyword id="KW-0964">Secreted</keyword>